<evidence type="ECO:0000255" key="1">
    <source>
        <dbReference type="HAMAP-Rule" id="MF_01371"/>
    </source>
</evidence>
<evidence type="ECO:0000305" key="2"/>
<accession>Q92GY4</accession>
<organism>
    <name type="scientific">Rickettsia conorii (strain ATCC VR-613 / Malish 7)</name>
    <dbReference type="NCBI Taxonomy" id="272944"/>
    <lineage>
        <taxon>Bacteria</taxon>
        <taxon>Pseudomonadati</taxon>
        <taxon>Pseudomonadota</taxon>
        <taxon>Alphaproteobacteria</taxon>
        <taxon>Rickettsiales</taxon>
        <taxon>Rickettsiaceae</taxon>
        <taxon>Rickettsieae</taxon>
        <taxon>Rickettsia</taxon>
        <taxon>spotted fever group</taxon>
    </lineage>
</organism>
<name>RL30_RICCN</name>
<feature type="chain" id="PRO_0000274839" description="Large ribosomal subunit protein uL30">
    <location>
        <begin position="1"/>
        <end position="63"/>
    </location>
</feature>
<protein>
    <recommendedName>
        <fullName evidence="1">Large ribosomal subunit protein uL30</fullName>
    </recommendedName>
    <alternativeName>
        <fullName evidence="2">50S ribosomal protein L30</fullName>
    </alternativeName>
</protein>
<gene>
    <name evidence="1" type="primary">rpmD</name>
    <name type="ordered locus">RC0988</name>
</gene>
<reference key="1">
    <citation type="journal article" date="2001" name="Science">
        <title>Mechanisms of evolution in Rickettsia conorii and R. prowazekii.</title>
        <authorList>
            <person name="Ogata H."/>
            <person name="Audic S."/>
            <person name="Renesto-Audiffren P."/>
            <person name="Fournier P.-E."/>
            <person name="Barbe V."/>
            <person name="Samson D."/>
            <person name="Roux V."/>
            <person name="Cossart P."/>
            <person name="Weissenbach J."/>
            <person name="Claverie J.-M."/>
            <person name="Raoult D."/>
        </authorList>
    </citation>
    <scope>NUCLEOTIDE SEQUENCE [LARGE SCALE GENOMIC DNA]</scope>
    <source>
        <strain>ATCC VR-613 / Malish 7</strain>
    </source>
</reference>
<sequence>MNNKINNIKITQVHSAIGRKYDQRLILVGLGLNKINKSVILANTNSIKGMVNKVKHLLKIENM</sequence>
<comment type="subunit">
    <text evidence="1">Part of the 50S ribosomal subunit.</text>
</comment>
<comment type="similarity">
    <text evidence="1">Belongs to the universal ribosomal protein uL30 family.</text>
</comment>
<proteinExistence type="inferred from homology"/>
<dbReference type="EMBL" id="AE006914">
    <property type="protein sequence ID" value="AAL03526.1"/>
    <property type="molecule type" value="Genomic_DNA"/>
</dbReference>
<dbReference type="PIR" id="D97823">
    <property type="entry name" value="D97823"/>
</dbReference>
<dbReference type="RefSeq" id="WP_004997827.1">
    <property type="nucleotide sequence ID" value="NC_003103.1"/>
</dbReference>
<dbReference type="SMR" id="Q92GY4"/>
<dbReference type="GeneID" id="95361468"/>
<dbReference type="KEGG" id="rco:RC0988"/>
<dbReference type="HOGENOM" id="CLU_131047_1_5_5"/>
<dbReference type="Proteomes" id="UP000000816">
    <property type="component" value="Chromosome"/>
</dbReference>
<dbReference type="GO" id="GO:0022625">
    <property type="term" value="C:cytosolic large ribosomal subunit"/>
    <property type="evidence" value="ECO:0007669"/>
    <property type="project" value="TreeGrafter"/>
</dbReference>
<dbReference type="GO" id="GO:0003735">
    <property type="term" value="F:structural constituent of ribosome"/>
    <property type="evidence" value="ECO:0007669"/>
    <property type="project" value="InterPro"/>
</dbReference>
<dbReference type="GO" id="GO:0006412">
    <property type="term" value="P:translation"/>
    <property type="evidence" value="ECO:0007669"/>
    <property type="project" value="UniProtKB-UniRule"/>
</dbReference>
<dbReference type="CDD" id="cd01658">
    <property type="entry name" value="Ribosomal_L30"/>
    <property type="match status" value="1"/>
</dbReference>
<dbReference type="Gene3D" id="3.30.1390.20">
    <property type="entry name" value="Ribosomal protein L30, ferredoxin-like fold domain"/>
    <property type="match status" value="1"/>
</dbReference>
<dbReference type="HAMAP" id="MF_01371_B">
    <property type="entry name" value="Ribosomal_uL30_B"/>
    <property type="match status" value="1"/>
</dbReference>
<dbReference type="InterPro" id="IPR036919">
    <property type="entry name" value="Ribo_uL30_ferredoxin-like_sf"/>
</dbReference>
<dbReference type="InterPro" id="IPR005996">
    <property type="entry name" value="Ribosomal_uL30_bac-type"/>
</dbReference>
<dbReference type="InterPro" id="IPR016082">
    <property type="entry name" value="Ribosomal_uL30_ferredoxin-like"/>
</dbReference>
<dbReference type="NCBIfam" id="TIGR01308">
    <property type="entry name" value="rpmD_bact"/>
    <property type="match status" value="1"/>
</dbReference>
<dbReference type="PANTHER" id="PTHR15892:SF2">
    <property type="entry name" value="LARGE RIBOSOMAL SUBUNIT PROTEIN UL30M"/>
    <property type="match status" value="1"/>
</dbReference>
<dbReference type="PANTHER" id="PTHR15892">
    <property type="entry name" value="MITOCHONDRIAL RIBOSOMAL PROTEIN L30"/>
    <property type="match status" value="1"/>
</dbReference>
<dbReference type="Pfam" id="PF00327">
    <property type="entry name" value="Ribosomal_L30"/>
    <property type="match status" value="1"/>
</dbReference>
<dbReference type="PIRSF" id="PIRSF002211">
    <property type="entry name" value="Ribosomal_L30_bac-type"/>
    <property type="match status" value="1"/>
</dbReference>
<dbReference type="SUPFAM" id="SSF55129">
    <property type="entry name" value="Ribosomal protein L30p/L7e"/>
    <property type="match status" value="1"/>
</dbReference>
<keyword id="KW-0687">Ribonucleoprotein</keyword>
<keyword id="KW-0689">Ribosomal protein</keyword>